<dbReference type="EMBL" id="CP001175">
    <property type="protein sequence ID" value="ACK39514.1"/>
    <property type="molecule type" value="Genomic_DNA"/>
</dbReference>
<dbReference type="RefSeq" id="WP_012581341.1">
    <property type="nucleotide sequence ID" value="NC_011660.1"/>
</dbReference>
<dbReference type="SMR" id="B8DFS4"/>
<dbReference type="KEGG" id="lmh:LMHCC_1166"/>
<dbReference type="HOGENOM" id="CLU_002472_3_1_9"/>
<dbReference type="GO" id="GO:0005829">
    <property type="term" value="C:cytosol"/>
    <property type="evidence" value="ECO:0007669"/>
    <property type="project" value="TreeGrafter"/>
</dbReference>
<dbReference type="GO" id="GO:0005524">
    <property type="term" value="F:ATP binding"/>
    <property type="evidence" value="ECO:0007669"/>
    <property type="project" value="UniProtKB-UniRule"/>
</dbReference>
<dbReference type="GO" id="GO:0140664">
    <property type="term" value="F:ATP-dependent DNA damage sensor activity"/>
    <property type="evidence" value="ECO:0007669"/>
    <property type="project" value="InterPro"/>
</dbReference>
<dbReference type="GO" id="GO:0003684">
    <property type="term" value="F:damaged DNA binding"/>
    <property type="evidence" value="ECO:0007669"/>
    <property type="project" value="UniProtKB-UniRule"/>
</dbReference>
<dbReference type="GO" id="GO:0030983">
    <property type="term" value="F:mismatched DNA binding"/>
    <property type="evidence" value="ECO:0007669"/>
    <property type="project" value="InterPro"/>
</dbReference>
<dbReference type="GO" id="GO:0006298">
    <property type="term" value="P:mismatch repair"/>
    <property type="evidence" value="ECO:0007669"/>
    <property type="project" value="UniProtKB-UniRule"/>
</dbReference>
<dbReference type="CDD" id="cd03284">
    <property type="entry name" value="ABC_MutS1"/>
    <property type="match status" value="1"/>
</dbReference>
<dbReference type="FunFam" id="1.10.1420.10:FF:000007">
    <property type="entry name" value="DNA mismatch repair protein MutS"/>
    <property type="match status" value="1"/>
</dbReference>
<dbReference type="FunFam" id="3.40.1170.10:FF:000001">
    <property type="entry name" value="DNA mismatch repair protein MutS"/>
    <property type="match status" value="1"/>
</dbReference>
<dbReference type="FunFam" id="3.40.50.300:FF:000896">
    <property type="entry name" value="DNA mismatch repair protein MutS"/>
    <property type="match status" value="1"/>
</dbReference>
<dbReference type="Gene3D" id="1.10.1420.10">
    <property type="match status" value="2"/>
</dbReference>
<dbReference type="Gene3D" id="3.40.1170.10">
    <property type="entry name" value="DNA repair protein MutS, domain I"/>
    <property type="match status" value="1"/>
</dbReference>
<dbReference type="Gene3D" id="3.30.420.110">
    <property type="entry name" value="MutS, connector domain"/>
    <property type="match status" value="1"/>
</dbReference>
<dbReference type="Gene3D" id="3.40.50.300">
    <property type="entry name" value="P-loop containing nucleotide triphosphate hydrolases"/>
    <property type="match status" value="1"/>
</dbReference>
<dbReference type="HAMAP" id="MF_00096">
    <property type="entry name" value="MutS"/>
    <property type="match status" value="1"/>
</dbReference>
<dbReference type="InterPro" id="IPR005748">
    <property type="entry name" value="DNA_mismatch_repair_MutS"/>
</dbReference>
<dbReference type="InterPro" id="IPR007695">
    <property type="entry name" value="DNA_mismatch_repair_MutS-lik_N"/>
</dbReference>
<dbReference type="InterPro" id="IPR017261">
    <property type="entry name" value="DNA_mismatch_repair_MutS/MSH"/>
</dbReference>
<dbReference type="InterPro" id="IPR000432">
    <property type="entry name" value="DNA_mismatch_repair_MutS_C"/>
</dbReference>
<dbReference type="InterPro" id="IPR007861">
    <property type="entry name" value="DNA_mismatch_repair_MutS_clamp"/>
</dbReference>
<dbReference type="InterPro" id="IPR007696">
    <property type="entry name" value="DNA_mismatch_repair_MutS_core"/>
</dbReference>
<dbReference type="InterPro" id="IPR016151">
    <property type="entry name" value="DNA_mismatch_repair_MutS_N"/>
</dbReference>
<dbReference type="InterPro" id="IPR036187">
    <property type="entry name" value="DNA_mismatch_repair_MutS_sf"/>
</dbReference>
<dbReference type="InterPro" id="IPR007860">
    <property type="entry name" value="DNA_mmatch_repair_MutS_con_dom"/>
</dbReference>
<dbReference type="InterPro" id="IPR045076">
    <property type="entry name" value="MutS"/>
</dbReference>
<dbReference type="InterPro" id="IPR036678">
    <property type="entry name" value="MutS_con_dom_sf"/>
</dbReference>
<dbReference type="InterPro" id="IPR027417">
    <property type="entry name" value="P-loop_NTPase"/>
</dbReference>
<dbReference type="NCBIfam" id="TIGR01070">
    <property type="entry name" value="mutS1"/>
    <property type="match status" value="1"/>
</dbReference>
<dbReference type="NCBIfam" id="NF003810">
    <property type="entry name" value="PRK05399.1"/>
    <property type="match status" value="1"/>
</dbReference>
<dbReference type="PANTHER" id="PTHR11361:SF34">
    <property type="entry name" value="DNA MISMATCH REPAIR PROTEIN MSH1, MITOCHONDRIAL"/>
    <property type="match status" value="1"/>
</dbReference>
<dbReference type="PANTHER" id="PTHR11361">
    <property type="entry name" value="DNA MISMATCH REPAIR PROTEIN MUTS FAMILY MEMBER"/>
    <property type="match status" value="1"/>
</dbReference>
<dbReference type="Pfam" id="PF01624">
    <property type="entry name" value="MutS_I"/>
    <property type="match status" value="1"/>
</dbReference>
<dbReference type="Pfam" id="PF05188">
    <property type="entry name" value="MutS_II"/>
    <property type="match status" value="1"/>
</dbReference>
<dbReference type="Pfam" id="PF05192">
    <property type="entry name" value="MutS_III"/>
    <property type="match status" value="1"/>
</dbReference>
<dbReference type="Pfam" id="PF05190">
    <property type="entry name" value="MutS_IV"/>
    <property type="match status" value="1"/>
</dbReference>
<dbReference type="Pfam" id="PF00488">
    <property type="entry name" value="MutS_V"/>
    <property type="match status" value="1"/>
</dbReference>
<dbReference type="PIRSF" id="PIRSF037677">
    <property type="entry name" value="DNA_mis_repair_Msh6"/>
    <property type="match status" value="1"/>
</dbReference>
<dbReference type="SMART" id="SM00534">
    <property type="entry name" value="MUTSac"/>
    <property type="match status" value="1"/>
</dbReference>
<dbReference type="SMART" id="SM00533">
    <property type="entry name" value="MUTSd"/>
    <property type="match status" value="1"/>
</dbReference>
<dbReference type="SUPFAM" id="SSF55271">
    <property type="entry name" value="DNA repair protein MutS, domain I"/>
    <property type="match status" value="1"/>
</dbReference>
<dbReference type="SUPFAM" id="SSF53150">
    <property type="entry name" value="DNA repair protein MutS, domain II"/>
    <property type="match status" value="1"/>
</dbReference>
<dbReference type="SUPFAM" id="SSF48334">
    <property type="entry name" value="DNA repair protein MutS, domain III"/>
    <property type="match status" value="1"/>
</dbReference>
<dbReference type="SUPFAM" id="SSF52540">
    <property type="entry name" value="P-loop containing nucleoside triphosphate hydrolases"/>
    <property type="match status" value="1"/>
</dbReference>
<dbReference type="PROSITE" id="PS00486">
    <property type="entry name" value="DNA_MISMATCH_REPAIR_2"/>
    <property type="match status" value="1"/>
</dbReference>
<protein>
    <recommendedName>
        <fullName evidence="1">DNA mismatch repair protein MutS</fullName>
    </recommendedName>
</protein>
<reference key="1">
    <citation type="journal article" date="2011" name="J. Bacteriol.">
        <title>Genome sequence of lineage III Listeria monocytogenes strain HCC23.</title>
        <authorList>
            <person name="Steele C.L."/>
            <person name="Donaldson J.R."/>
            <person name="Paul D."/>
            <person name="Banes M.M."/>
            <person name="Arick T."/>
            <person name="Bridges S.M."/>
            <person name="Lawrence M.L."/>
        </authorList>
    </citation>
    <scope>NUCLEOTIDE SEQUENCE [LARGE SCALE GENOMIC DNA]</scope>
    <source>
        <strain>HCC23</strain>
    </source>
</reference>
<evidence type="ECO:0000255" key="1">
    <source>
        <dbReference type="HAMAP-Rule" id="MF_00096"/>
    </source>
</evidence>
<name>MUTS_LISMH</name>
<sequence length="860" mass="98273">MTEYTPMIKQYLEIKDKYQDAFLFFRLGDFYEMFFEDALNASQILEITLTGREGGTKEKIPMCGVPYHSASGYIDTLIEKGYKVAICEQVEDPKTTKGMVKREVVQLISPGTVMDERGLKAKENNYIASLYCYEGKEYGFAYSDLSTGELKSTVIEASEDRLINELTTLSTRELIVSASEKEVLSDVMKEQLGLTFSVHEEDTIPLENEKLVTRHMSLSEKRAIGKLLHYLKETQKRDLGHLQQAVHYETSNYMKMDYYSKRNLELAESIRGKGRQGTLLWLLDNTQTAMGGRMLKQWIDRPLIDRNKIIERQNDVSELMANFFERLELVENLKNVYDLERLAGRVAYGNVNARDLIQLRNSLYQIPRIRATLLSMNSKSLTELANQLDPCEELTEKLEEAIMDSAPISIREGGIIKDGYNSQLDTYRDASRNGKTWIAELERKERELTGIKTMKVGFNRVFGYYIEVTRANTHLLPEGRYERKQTLTNAERYITPELKEKEKLILDAEEKSMELEYQLFTEVRELVKDYIERLQKLAKSVSEIDCLQSFADISEKNHFIRPTLSEDGSLHVKQGRHPVVEKVMGAQSYVANDCDLDRNREILLITGPNMSGKSTYMRQVALTAICAQVGCFVPAEEATLPIFDQIFTRIGAADDLIAGQSTFMVEMLEARNAIVHATKDSLILFDEIGRGTATYDGMALAQAIIEYIHENVHAKTLFSTHYHELTDLEKELHGLQNIHVSAVEENGKVVFLHKIKEGPADKSYGIHVAELAELPKSLIERASRILEQLENDDKKIVITNDKQPEEIHEEVQLSMFPVEPEKKASSKETKLLKEIASMNIMQMTPMDAMNKLYELQSKIH</sequence>
<keyword id="KW-0067">ATP-binding</keyword>
<keyword id="KW-0227">DNA damage</keyword>
<keyword id="KW-0234">DNA repair</keyword>
<keyword id="KW-0238">DNA-binding</keyword>
<keyword id="KW-0547">Nucleotide-binding</keyword>
<accession>B8DFS4</accession>
<gene>
    <name evidence="1" type="primary">mutS</name>
    <name type="ordered locus">LMHCC_1166</name>
</gene>
<organism>
    <name type="scientific">Listeria monocytogenes serotype 4a (strain HCC23)</name>
    <dbReference type="NCBI Taxonomy" id="552536"/>
    <lineage>
        <taxon>Bacteria</taxon>
        <taxon>Bacillati</taxon>
        <taxon>Bacillota</taxon>
        <taxon>Bacilli</taxon>
        <taxon>Bacillales</taxon>
        <taxon>Listeriaceae</taxon>
        <taxon>Listeria</taxon>
    </lineage>
</organism>
<proteinExistence type="inferred from homology"/>
<feature type="chain" id="PRO_1000118686" description="DNA mismatch repair protein MutS">
    <location>
        <begin position="1"/>
        <end position="860"/>
    </location>
</feature>
<feature type="binding site" evidence="1">
    <location>
        <begin position="607"/>
        <end position="614"/>
    </location>
    <ligand>
        <name>ATP</name>
        <dbReference type="ChEBI" id="CHEBI:30616"/>
    </ligand>
</feature>
<comment type="function">
    <text evidence="1">This protein is involved in the repair of mismatches in DNA. It is possible that it carries out the mismatch recognition step. This protein has a weak ATPase activity.</text>
</comment>
<comment type="similarity">
    <text evidence="1">Belongs to the DNA mismatch repair MutS family.</text>
</comment>